<organism>
    <name type="scientific">Aeromonas salmonicida (strain A449)</name>
    <dbReference type="NCBI Taxonomy" id="382245"/>
    <lineage>
        <taxon>Bacteria</taxon>
        <taxon>Pseudomonadati</taxon>
        <taxon>Pseudomonadota</taxon>
        <taxon>Gammaproteobacteria</taxon>
        <taxon>Aeromonadales</taxon>
        <taxon>Aeromonadaceae</taxon>
        <taxon>Aeromonas</taxon>
    </lineage>
</organism>
<dbReference type="EC" id="2.1.3.15" evidence="1"/>
<dbReference type="EMBL" id="CP000644">
    <property type="protein sequence ID" value="ABO90559.1"/>
    <property type="molecule type" value="Genomic_DNA"/>
</dbReference>
<dbReference type="RefSeq" id="WP_005310570.1">
    <property type="nucleotide sequence ID" value="NC_009348.1"/>
</dbReference>
<dbReference type="SMR" id="A4SNT7"/>
<dbReference type="STRING" id="29491.GCA_000820065_00742"/>
<dbReference type="GeneID" id="79879360"/>
<dbReference type="KEGG" id="asa:ASA_2530"/>
<dbReference type="eggNOG" id="COG0777">
    <property type="taxonomic scope" value="Bacteria"/>
</dbReference>
<dbReference type="HOGENOM" id="CLU_015486_1_0_6"/>
<dbReference type="UniPathway" id="UPA00655">
    <property type="reaction ID" value="UER00711"/>
</dbReference>
<dbReference type="Proteomes" id="UP000000225">
    <property type="component" value="Chromosome"/>
</dbReference>
<dbReference type="GO" id="GO:0009329">
    <property type="term" value="C:acetate CoA-transferase complex"/>
    <property type="evidence" value="ECO:0007669"/>
    <property type="project" value="TreeGrafter"/>
</dbReference>
<dbReference type="GO" id="GO:0003989">
    <property type="term" value="F:acetyl-CoA carboxylase activity"/>
    <property type="evidence" value="ECO:0007669"/>
    <property type="project" value="InterPro"/>
</dbReference>
<dbReference type="GO" id="GO:0005524">
    <property type="term" value="F:ATP binding"/>
    <property type="evidence" value="ECO:0007669"/>
    <property type="project" value="UniProtKB-KW"/>
</dbReference>
<dbReference type="GO" id="GO:0016743">
    <property type="term" value="F:carboxyl- or carbamoyltransferase activity"/>
    <property type="evidence" value="ECO:0007669"/>
    <property type="project" value="UniProtKB-UniRule"/>
</dbReference>
<dbReference type="GO" id="GO:0008270">
    <property type="term" value="F:zinc ion binding"/>
    <property type="evidence" value="ECO:0007669"/>
    <property type="project" value="UniProtKB-UniRule"/>
</dbReference>
<dbReference type="GO" id="GO:0006633">
    <property type="term" value="P:fatty acid biosynthetic process"/>
    <property type="evidence" value="ECO:0007669"/>
    <property type="project" value="UniProtKB-KW"/>
</dbReference>
<dbReference type="GO" id="GO:2001295">
    <property type="term" value="P:malonyl-CoA biosynthetic process"/>
    <property type="evidence" value="ECO:0007669"/>
    <property type="project" value="UniProtKB-UniRule"/>
</dbReference>
<dbReference type="Gene3D" id="3.90.226.10">
    <property type="entry name" value="2-enoyl-CoA Hydratase, Chain A, domain 1"/>
    <property type="match status" value="1"/>
</dbReference>
<dbReference type="HAMAP" id="MF_01395">
    <property type="entry name" value="AcetylCoA_CT_beta"/>
    <property type="match status" value="1"/>
</dbReference>
<dbReference type="InterPro" id="IPR034733">
    <property type="entry name" value="AcCoA_carboxyl_beta"/>
</dbReference>
<dbReference type="InterPro" id="IPR000438">
    <property type="entry name" value="Acetyl_CoA_COase_Trfase_b_su"/>
</dbReference>
<dbReference type="InterPro" id="IPR029045">
    <property type="entry name" value="ClpP/crotonase-like_dom_sf"/>
</dbReference>
<dbReference type="InterPro" id="IPR011762">
    <property type="entry name" value="COA_CT_N"/>
</dbReference>
<dbReference type="InterPro" id="IPR041010">
    <property type="entry name" value="Znf-ACC"/>
</dbReference>
<dbReference type="NCBIfam" id="TIGR00515">
    <property type="entry name" value="accD"/>
    <property type="match status" value="1"/>
</dbReference>
<dbReference type="PANTHER" id="PTHR42995">
    <property type="entry name" value="ACETYL-COENZYME A CARBOXYLASE CARBOXYL TRANSFERASE SUBUNIT BETA, CHLOROPLASTIC"/>
    <property type="match status" value="1"/>
</dbReference>
<dbReference type="PANTHER" id="PTHR42995:SF5">
    <property type="entry name" value="ACETYL-COENZYME A CARBOXYLASE CARBOXYL TRANSFERASE SUBUNIT BETA, CHLOROPLASTIC"/>
    <property type="match status" value="1"/>
</dbReference>
<dbReference type="Pfam" id="PF01039">
    <property type="entry name" value="Carboxyl_trans"/>
    <property type="match status" value="1"/>
</dbReference>
<dbReference type="Pfam" id="PF17848">
    <property type="entry name" value="Zn_ribbon_ACC"/>
    <property type="match status" value="1"/>
</dbReference>
<dbReference type="PRINTS" id="PR01070">
    <property type="entry name" value="ACCCTRFRASEB"/>
</dbReference>
<dbReference type="SUPFAM" id="SSF52096">
    <property type="entry name" value="ClpP/crotonase"/>
    <property type="match status" value="1"/>
</dbReference>
<dbReference type="PROSITE" id="PS50980">
    <property type="entry name" value="COA_CT_NTER"/>
    <property type="match status" value="1"/>
</dbReference>
<accession>A4SNT7</accession>
<sequence length="287" mass="31719">MSWLEKILPKSKITTPRRHNIPEGVWTKCSACEQVLYRAELERNLEVCPKCDHHMRISARARLESFLDEQGRTEVGAELEPQDILKFKDSKRYKDRLSAAQKATGEKDALVVMKGTLKGVPVVACSFEFSFIGGSMSSVVGARFVRAVEECIKEGRGLVCFSASGGARMQEALFSLMQMAKTSAALDRLTKAGLPYISVLTDPTMGGVSASLAMLGDINVGEPKALIGFAGPRVIEQTVREKLPEGFQRSEFLLEKGAIDLIIDRREMRNRLASLLAKMLNTHVIEE</sequence>
<keyword id="KW-0067">ATP-binding</keyword>
<keyword id="KW-0963">Cytoplasm</keyword>
<keyword id="KW-0275">Fatty acid biosynthesis</keyword>
<keyword id="KW-0276">Fatty acid metabolism</keyword>
<keyword id="KW-0444">Lipid biosynthesis</keyword>
<keyword id="KW-0443">Lipid metabolism</keyword>
<keyword id="KW-0479">Metal-binding</keyword>
<keyword id="KW-0547">Nucleotide-binding</keyword>
<keyword id="KW-0808">Transferase</keyword>
<keyword id="KW-0862">Zinc</keyword>
<keyword id="KW-0863">Zinc-finger</keyword>
<comment type="function">
    <text evidence="1">Component of the acetyl coenzyme A carboxylase (ACC) complex. Biotin carboxylase (BC) catalyzes the carboxylation of biotin on its carrier protein (BCCP) and then the CO(2) group is transferred by the transcarboxylase to acetyl-CoA to form malonyl-CoA.</text>
</comment>
<comment type="catalytic activity">
    <reaction evidence="1">
        <text>N(6)-carboxybiotinyl-L-lysyl-[protein] + acetyl-CoA = N(6)-biotinyl-L-lysyl-[protein] + malonyl-CoA</text>
        <dbReference type="Rhea" id="RHEA:54728"/>
        <dbReference type="Rhea" id="RHEA-COMP:10505"/>
        <dbReference type="Rhea" id="RHEA-COMP:10506"/>
        <dbReference type="ChEBI" id="CHEBI:57288"/>
        <dbReference type="ChEBI" id="CHEBI:57384"/>
        <dbReference type="ChEBI" id="CHEBI:83144"/>
        <dbReference type="ChEBI" id="CHEBI:83145"/>
        <dbReference type="EC" id="2.1.3.15"/>
    </reaction>
</comment>
<comment type="cofactor">
    <cofactor evidence="1">
        <name>Zn(2+)</name>
        <dbReference type="ChEBI" id="CHEBI:29105"/>
    </cofactor>
    <text evidence="1">Binds 1 zinc ion per subunit.</text>
</comment>
<comment type="pathway">
    <text evidence="1">Lipid metabolism; malonyl-CoA biosynthesis; malonyl-CoA from acetyl-CoA: step 1/1.</text>
</comment>
<comment type="subunit">
    <text evidence="1">Acetyl-CoA carboxylase is a heterohexamer composed of biotin carboxyl carrier protein (AccB), biotin carboxylase (AccC) and two subunits each of ACCase subunit alpha (AccA) and ACCase subunit beta (AccD).</text>
</comment>
<comment type="subcellular location">
    <subcellularLocation>
        <location evidence="1">Cytoplasm</location>
    </subcellularLocation>
</comment>
<comment type="similarity">
    <text evidence="1">Belongs to the AccD/PCCB family.</text>
</comment>
<evidence type="ECO:0000255" key="1">
    <source>
        <dbReference type="HAMAP-Rule" id="MF_01395"/>
    </source>
</evidence>
<evidence type="ECO:0000255" key="2">
    <source>
        <dbReference type="PROSITE-ProRule" id="PRU01136"/>
    </source>
</evidence>
<protein>
    <recommendedName>
        <fullName evidence="1">Acetyl-coenzyme A carboxylase carboxyl transferase subunit beta</fullName>
        <shortName evidence="1">ACCase subunit beta</shortName>
        <shortName evidence="1">Acetyl-CoA carboxylase carboxyltransferase subunit beta</shortName>
        <ecNumber evidence="1">2.1.3.15</ecNumber>
    </recommendedName>
</protein>
<feature type="chain" id="PRO_0000358949" description="Acetyl-coenzyme A carboxylase carboxyl transferase subunit beta">
    <location>
        <begin position="1"/>
        <end position="287"/>
    </location>
</feature>
<feature type="domain" description="CoA carboxyltransferase N-terminal" evidence="2">
    <location>
        <begin position="25"/>
        <end position="287"/>
    </location>
</feature>
<feature type="zinc finger region" description="C4-type" evidence="1">
    <location>
        <begin position="29"/>
        <end position="51"/>
    </location>
</feature>
<feature type="binding site" evidence="1">
    <location>
        <position position="29"/>
    </location>
    <ligand>
        <name>Zn(2+)</name>
        <dbReference type="ChEBI" id="CHEBI:29105"/>
    </ligand>
</feature>
<feature type="binding site" evidence="1">
    <location>
        <position position="32"/>
    </location>
    <ligand>
        <name>Zn(2+)</name>
        <dbReference type="ChEBI" id="CHEBI:29105"/>
    </ligand>
</feature>
<feature type="binding site" evidence="1">
    <location>
        <position position="48"/>
    </location>
    <ligand>
        <name>Zn(2+)</name>
        <dbReference type="ChEBI" id="CHEBI:29105"/>
    </ligand>
</feature>
<feature type="binding site" evidence="1">
    <location>
        <position position="51"/>
    </location>
    <ligand>
        <name>Zn(2+)</name>
        <dbReference type="ChEBI" id="CHEBI:29105"/>
    </ligand>
</feature>
<reference key="1">
    <citation type="journal article" date="2008" name="BMC Genomics">
        <title>The genome of Aeromonas salmonicida subsp. salmonicida A449: insights into the evolution of a fish pathogen.</title>
        <authorList>
            <person name="Reith M.E."/>
            <person name="Singh R.K."/>
            <person name="Curtis B."/>
            <person name="Boyd J.M."/>
            <person name="Bouevitch A."/>
            <person name="Kimball J."/>
            <person name="Munholland J."/>
            <person name="Murphy C."/>
            <person name="Sarty D."/>
            <person name="Williams J."/>
            <person name="Nash J.H."/>
            <person name="Johnson S.C."/>
            <person name="Brown L.L."/>
        </authorList>
    </citation>
    <scope>NUCLEOTIDE SEQUENCE [LARGE SCALE GENOMIC DNA]</scope>
    <source>
        <strain>A449</strain>
    </source>
</reference>
<gene>
    <name evidence="1" type="primary">accD</name>
    <name type="ordered locus">ASA_2530</name>
</gene>
<proteinExistence type="inferred from homology"/>
<name>ACCD_AERS4</name>